<gene>
    <name type="ordered locus">SaurJH9_0939</name>
</gene>
<dbReference type="EMBL" id="CP000703">
    <property type="protein sequence ID" value="ABQ48740.1"/>
    <property type="molecule type" value="Genomic_DNA"/>
</dbReference>
<dbReference type="RefSeq" id="WP_001068337.1">
    <property type="nucleotide sequence ID" value="NC_009487.1"/>
</dbReference>
<dbReference type="SMR" id="A5IRB7"/>
<dbReference type="KEGG" id="saj:SaurJH9_0939"/>
<dbReference type="HOGENOM" id="CLU_182025_0_0_9"/>
<dbReference type="HAMAP" id="MF_01542">
    <property type="entry name" value="UPF0349"/>
    <property type="match status" value="1"/>
</dbReference>
<dbReference type="InterPro" id="IPR009910">
    <property type="entry name" value="DUF1450"/>
</dbReference>
<dbReference type="InterPro" id="IPR022916">
    <property type="entry name" value="UPF0349"/>
</dbReference>
<dbReference type="NCBIfam" id="NF010190">
    <property type="entry name" value="PRK13669.1"/>
    <property type="match status" value="1"/>
</dbReference>
<dbReference type="Pfam" id="PF07293">
    <property type="entry name" value="DUF1450"/>
    <property type="match status" value="1"/>
</dbReference>
<sequence length="78" mass="8657">MNPIVEFCLSNMAKGGDYVFNQLENDPDVDVLEYGCLTHCGICSAGLYALVNGDIVEGDSPEELLQNIYAHIKETWIF</sequence>
<comment type="similarity">
    <text evidence="1">Belongs to the UPF0349 family.</text>
</comment>
<evidence type="ECO:0000255" key="1">
    <source>
        <dbReference type="HAMAP-Rule" id="MF_01542"/>
    </source>
</evidence>
<protein>
    <recommendedName>
        <fullName evidence="1">UPF0349 protein SaurJH9_0939</fullName>
    </recommendedName>
</protein>
<organism>
    <name type="scientific">Staphylococcus aureus (strain JH9)</name>
    <dbReference type="NCBI Taxonomy" id="359786"/>
    <lineage>
        <taxon>Bacteria</taxon>
        <taxon>Bacillati</taxon>
        <taxon>Bacillota</taxon>
        <taxon>Bacilli</taxon>
        <taxon>Bacillales</taxon>
        <taxon>Staphylococcaceae</taxon>
        <taxon>Staphylococcus</taxon>
    </lineage>
</organism>
<reference key="1">
    <citation type="submission" date="2007-05" db="EMBL/GenBank/DDBJ databases">
        <title>Complete sequence of chromosome of Staphylococcus aureus subsp. aureus JH9.</title>
        <authorList>
            <consortium name="US DOE Joint Genome Institute"/>
            <person name="Copeland A."/>
            <person name="Lucas S."/>
            <person name="Lapidus A."/>
            <person name="Barry K."/>
            <person name="Detter J.C."/>
            <person name="Glavina del Rio T."/>
            <person name="Hammon N."/>
            <person name="Israni S."/>
            <person name="Pitluck S."/>
            <person name="Chain P."/>
            <person name="Malfatti S."/>
            <person name="Shin M."/>
            <person name="Vergez L."/>
            <person name="Schmutz J."/>
            <person name="Larimer F."/>
            <person name="Land M."/>
            <person name="Hauser L."/>
            <person name="Kyrpides N."/>
            <person name="Kim E."/>
            <person name="Tomasz A."/>
            <person name="Richardson P."/>
        </authorList>
    </citation>
    <scope>NUCLEOTIDE SEQUENCE [LARGE SCALE GENOMIC DNA]</scope>
    <source>
        <strain>JH9</strain>
    </source>
</reference>
<name>Y939_STAA9</name>
<feature type="chain" id="PRO_1000087647" description="UPF0349 protein SaurJH9_0939">
    <location>
        <begin position="1"/>
        <end position="78"/>
    </location>
</feature>
<proteinExistence type="inferred from homology"/>
<accession>A5IRB7</accession>